<keyword id="KW-0165">Cleavage on pair of basic residues</keyword>
<keyword id="KW-1015">Disulfide bond</keyword>
<keyword id="KW-0872">Ion channel impairing toxin</keyword>
<keyword id="KW-0166">Nematocyst</keyword>
<keyword id="KW-0528">Neurotoxin</keyword>
<keyword id="KW-0632">Potassium channel impairing toxin</keyword>
<keyword id="KW-1185">Reference proteome</keyword>
<keyword id="KW-0964">Secreted</keyword>
<keyword id="KW-0732">Signal</keyword>
<keyword id="KW-0800">Toxin</keyword>
<keyword id="KW-1220">Voltage-gated potassium channel impairing toxin</keyword>
<organism>
    <name type="scientific">Nematostella vectensis</name>
    <name type="common">Starlet sea anemone</name>
    <dbReference type="NCBI Taxonomy" id="45351"/>
    <lineage>
        <taxon>Eukaryota</taxon>
        <taxon>Metazoa</taxon>
        <taxon>Cnidaria</taxon>
        <taxon>Anthozoa</taxon>
        <taxon>Hexacorallia</taxon>
        <taxon>Actiniaria</taxon>
        <taxon>Edwardsiidae</taxon>
        <taxon>Nematostella</taxon>
    </lineage>
</organism>
<proteinExistence type="evidence at protein level"/>
<sequence length="84" mass="9713">MFSARLVLVFAVVLCIQLCNASWLDERAMTQEKRCNGKYQKCTSNSQCCDQKDYAKRKLRCLTQCDEGGCMKYKQCMFYAGTQK</sequence>
<name>KV51_NEMVE</name>
<accession>A7RMN1</accession>
<gene>
    <name type="ORF">v1g239401</name>
</gene>
<dbReference type="EMBL" id="DS469520">
    <property type="protein sequence ID" value="EDO47375.1"/>
    <property type="status" value="ALT_INIT"/>
    <property type="molecule type" value="Genomic_DNA"/>
</dbReference>
<dbReference type="RefSeq" id="XP_001639438.1">
    <property type="nucleotide sequence ID" value="XM_001639388.1"/>
</dbReference>
<dbReference type="SMR" id="A7RMN1"/>
<dbReference type="TCDB" id="8.B.19.1.2">
    <property type="family name" value="the sea anemone k+ channel blocker toxin, bcstx3 (bcstx3) family"/>
</dbReference>
<dbReference type="HOGENOM" id="CLU_1429600_0_0_1"/>
<dbReference type="InParanoid" id="A7RMN1"/>
<dbReference type="Proteomes" id="UP000001593">
    <property type="component" value="Unassembled WGS sequence"/>
</dbReference>
<dbReference type="GO" id="GO:0005576">
    <property type="term" value="C:extracellular region"/>
    <property type="evidence" value="ECO:0007669"/>
    <property type="project" value="UniProtKB-SubCell"/>
</dbReference>
<dbReference type="GO" id="GO:0042151">
    <property type="term" value="C:nematocyst"/>
    <property type="evidence" value="ECO:0007669"/>
    <property type="project" value="UniProtKB-SubCell"/>
</dbReference>
<dbReference type="GO" id="GO:0015459">
    <property type="term" value="F:potassium channel regulator activity"/>
    <property type="evidence" value="ECO:0007669"/>
    <property type="project" value="UniProtKB-KW"/>
</dbReference>
<dbReference type="GO" id="GO:0090729">
    <property type="term" value="F:toxin activity"/>
    <property type="evidence" value="ECO:0007669"/>
    <property type="project" value="UniProtKB-KW"/>
</dbReference>
<comment type="function">
    <text evidence="1 3 7">Neurotoxin that is probably only defensive (Probable). Acts as a voltage-gated potassium channel (Kv) inhibitor (By similarity). In vivo, induces a rapid increase in swimming speed on zebrafish larvae, as well as death which occurs between 2 and 18 hours later (PubMed:29424690).</text>
</comment>
<comment type="subcellular location">
    <subcellularLocation>
        <location evidence="1">Secreted</location>
    </subcellularLocation>
    <subcellularLocation>
        <location evidence="1">Nematocyst</location>
    </subcellularLocation>
</comment>
<comment type="tissue specificity">
    <text evidence="3">In unfertilized eggs and early post-fertilization stages, is expressed uniformly. In gastrulae, the expression becomes spatially-localized and seems to be absent from the oral and aboral poles. In planulae, the expression is clearly observed in the ectoderm in packed gland cells absent from the two body poles, and upon metamorphosis, the expression diminishes. There is two types of gland cells, one large and elongated and another small and round. This toxin is maternally deposited at both protein and RNA levels.</text>
</comment>
<comment type="developmental stage">
    <text evidence="3">Highly expressed in unfertilized eggs, late planulae, primary polyps, and adult females (at protein level). Not expressed in adult males (at protein level). Consistant with protein expression, transcripts are highly expressed in unfertilized eggs, blastulae, gastrulae, early and late planulae, metamorphosing planulae, and adult females. Its expression is moderate in primary polyps. Its expression is very low in juvenile polyps, and adult males.</text>
</comment>
<comment type="PTM">
    <text evidence="1">Contains 4 disulfide bonds.</text>
</comment>
<comment type="similarity">
    <text evidence="5">Belongs to the sea anemone type 5 potassium channel toxin family.</text>
</comment>
<comment type="sequence caution" evidence="5">
    <conflict type="erroneous initiation">
        <sequence resource="EMBL-CDS" id="EDO47375"/>
    </conflict>
    <text>Extended N-terminus.</text>
</comment>
<reference key="1">
    <citation type="journal article" date="2007" name="Science">
        <title>Sea anemone genome reveals ancestral eumetazoan gene repertoire and genomic organization.</title>
        <authorList>
            <person name="Putnam N.H."/>
            <person name="Srivastava M."/>
            <person name="Hellsten U."/>
            <person name="Dirks B."/>
            <person name="Chapman J."/>
            <person name="Salamov A."/>
            <person name="Terry A."/>
            <person name="Shapiro H."/>
            <person name="Lindquist E."/>
            <person name="Kapitonov V.V."/>
            <person name="Jurka J."/>
            <person name="Genikhovich G."/>
            <person name="Grigoriev I.V."/>
            <person name="Lucas S.M."/>
            <person name="Steele R.E."/>
            <person name="Finnerty J.R."/>
            <person name="Technau U."/>
            <person name="Martindale M.Q."/>
            <person name="Rokhsar D.S."/>
        </authorList>
    </citation>
    <scope>NUCLEOTIDE SEQUENCE [LARGE SCALE GENOMIC DNA]</scope>
    <source>
        <strain>CH2 X CH6</strain>
    </source>
</reference>
<reference key="2">
    <citation type="journal article" date="2013" name="FEBS J.">
        <title>BcsTx3 is a founder of a novel sea anemone toxin family of potassium channel blocker.</title>
        <authorList>
            <person name="Orts D.J."/>
            <person name="Moran Y."/>
            <person name="Cologna C.T."/>
            <person name="Peigneur S."/>
            <person name="Madio B."/>
            <person name="Praher D."/>
            <person name="Quinton L."/>
            <person name="De Pauw E."/>
            <person name="Bicudo J.E."/>
            <person name="Tytgat J."/>
            <person name="de Freitas J.C."/>
        </authorList>
    </citation>
    <scope>NOMENCLATURE</scope>
</reference>
<reference key="3">
    <citation type="journal article" date="2018" name="Elife">
        <title>Dynamics of venom composition across a complex life cycle.</title>
        <authorList>
            <person name="Columbus-Shenkar Y.Y."/>
            <person name="Sachkova M.Y."/>
            <person name="Macrander J."/>
            <person name="Fridrich A."/>
            <person name="Modepalli V."/>
            <person name="Reitzel A.M."/>
            <person name="Sunagar K."/>
            <person name="Moran Y."/>
        </authorList>
    </citation>
    <scope>FUNCTION</scope>
    <scope>RECOMBINANT EXPRESSION</scope>
    <scope>DEVELOPMENTAL STAGE</scope>
    <scope>TISSUE SPECIFICITY</scope>
</reference>
<feature type="signal peptide" evidence="2">
    <location>
        <begin position="1"/>
        <end position="21"/>
    </location>
</feature>
<feature type="propeptide" id="PRO_0000453816" evidence="6">
    <location>
        <begin position="22"/>
        <end position="34"/>
    </location>
</feature>
<feature type="chain" id="PRO_0000425829" description="Toxin NvePTx1" evidence="1 6">
    <location>
        <begin position="35"/>
        <end position="84"/>
    </location>
</feature>
<protein>
    <recommendedName>
        <fullName evidence="4">Toxin NvePTx1</fullName>
    </recommendedName>
</protein>
<evidence type="ECO:0000250" key="1">
    <source>
        <dbReference type="UniProtKB" id="C0HJC4"/>
    </source>
</evidence>
<evidence type="ECO:0000255" key="2"/>
<evidence type="ECO:0000269" key="3">
    <source>
    </source>
</evidence>
<evidence type="ECO:0000303" key="4">
    <source>
    </source>
</evidence>
<evidence type="ECO:0000305" key="5"/>
<evidence type="ECO:0000305" key="6">
    <source>
    </source>
</evidence>
<evidence type="ECO:0000305" key="7">
    <source>
    </source>
</evidence>